<feature type="chain" id="PRO_1000087088" description="Large ribosomal subunit protein uL13">
    <location>
        <begin position="1"/>
        <end position="142"/>
    </location>
</feature>
<comment type="function">
    <text evidence="1">This protein is one of the early assembly proteins of the 50S ribosomal subunit, although it is not seen to bind rRNA by itself. It is important during the early stages of 50S assembly.</text>
</comment>
<comment type="subunit">
    <text evidence="1">Part of the 50S ribosomal subunit.</text>
</comment>
<comment type="similarity">
    <text evidence="1">Belongs to the universal ribosomal protein uL13 family.</text>
</comment>
<accession>B1IQP8</accession>
<proteinExistence type="inferred from homology"/>
<reference key="1">
    <citation type="submission" date="2008-02" db="EMBL/GenBank/DDBJ databases">
        <title>Complete sequence of Escherichia coli C str. ATCC 8739.</title>
        <authorList>
            <person name="Copeland A."/>
            <person name="Lucas S."/>
            <person name="Lapidus A."/>
            <person name="Glavina del Rio T."/>
            <person name="Dalin E."/>
            <person name="Tice H."/>
            <person name="Bruce D."/>
            <person name="Goodwin L."/>
            <person name="Pitluck S."/>
            <person name="Kiss H."/>
            <person name="Brettin T."/>
            <person name="Detter J.C."/>
            <person name="Han C."/>
            <person name="Kuske C.R."/>
            <person name="Schmutz J."/>
            <person name="Larimer F."/>
            <person name="Land M."/>
            <person name="Hauser L."/>
            <person name="Kyrpides N."/>
            <person name="Mikhailova N."/>
            <person name="Ingram L."/>
            <person name="Richardson P."/>
        </authorList>
    </citation>
    <scope>NUCLEOTIDE SEQUENCE [LARGE SCALE GENOMIC DNA]</scope>
    <source>
        <strain>ATCC 8739 / DSM 1576 / NBRC 3972 / NCIMB 8545 / WDCM 00012 / Crooks</strain>
    </source>
</reference>
<gene>
    <name evidence="1" type="primary">rplM</name>
    <name type="ordered locus">EcolC_0475</name>
</gene>
<organism>
    <name type="scientific">Escherichia coli (strain ATCC 8739 / DSM 1576 / NBRC 3972 / NCIMB 8545 / WDCM 00012 / Crooks)</name>
    <dbReference type="NCBI Taxonomy" id="481805"/>
    <lineage>
        <taxon>Bacteria</taxon>
        <taxon>Pseudomonadati</taxon>
        <taxon>Pseudomonadota</taxon>
        <taxon>Gammaproteobacteria</taxon>
        <taxon>Enterobacterales</taxon>
        <taxon>Enterobacteriaceae</taxon>
        <taxon>Escherichia</taxon>
    </lineage>
</organism>
<keyword id="KW-0687">Ribonucleoprotein</keyword>
<keyword id="KW-0689">Ribosomal protein</keyword>
<name>RL13_ECOLC</name>
<sequence>MKTFTAKPETVKRDWYVVDATGKTLGRLATELARRLRGKHKAEYTPHVDTGDYIIVLNADKVAVTGNKRTDKVYYHHTGHIGGIKQATFEEMIARRPERVIEIAVKGMLPKGPLGRAMFRKLKVYAGNEHNHAAQQPQVLDI</sequence>
<dbReference type="EMBL" id="CP000946">
    <property type="protein sequence ID" value="ACA76152.1"/>
    <property type="molecule type" value="Genomic_DNA"/>
</dbReference>
<dbReference type="RefSeq" id="WP_000847559.1">
    <property type="nucleotide sequence ID" value="NZ_MTFT01000027.1"/>
</dbReference>
<dbReference type="SMR" id="B1IQP8"/>
<dbReference type="GeneID" id="89518067"/>
<dbReference type="KEGG" id="ecl:EcolC_0475"/>
<dbReference type="HOGENOM" id="CLU_082184_2_2_6"/>
<dbReference type="GO" id="GO:0022625">
    <property type="term" value="C:cytosolic large ribosomal subunit"/>
    <property type="evidence" value="ECO:0007669"/>
    <property type="project" value="TreeGrafter"/>
</dbReference>
<dbReference type="GO" id="GO:0003729">
    <property type="term" value="F:mRNA binding"/>
    <property type="evidence" value="ECO:0007669"/>
    <property type="project" value="TreeGrafter"/>
</dbReference>
<dbReference type="GO" id="GO:0003735">
    <property type="term" value="F:structural constituent of ribosome"/>
    <property type="evidence" value="ECO:0007669"/>
    <property type="project" value="InterPro"/>
</dbReference>
<dbReference type="GO" id="GO:0017148">
    <property type="term" value="P:negative regulation of translation"/>
    <property type="evidence" value="ECO:0007669"/>
    <property type="project" value="TreeGrafter"/>
</dbReference>
<dbReference type="GO" id="GO:0006412">
    <property type="term" value="P:translation"/>
    <property type="evidence" value="ECO:0007669"/>
    <property type="project" value="UniProtKB-UniRule"/>
</dbReference>
<dbReference type="CDD" id="cd00392">
    <property type="entry name" value="Ribosomal_L13"/>
    <property type="match status" value="1"/>
</dbReference>
<dbReference type="FunFam" id="3.90.1180.10:FF:000001">
    <property type="entry name" value="50S ribosomal protein L13"/>
    <property type="match status" value="1"/>
</dbReference>
<dbReference type="Gene3D" id="3.90.1180.10">
    <property type="entry name" value="Ribosomal protein L13"/>
    <property type="match status" value="1"/>
</dbReference>
<dbReference type="HAMAP" id="MF_01366">
    <property type="entry name" value="Ribosomal_uL13"/>
    <property type="match status" value="1"/>
</dbReference>
<dbReference type="InterPro" id="IPR005822">
    <property type="entry name" value="Ribosomal_uL13"/>
</dbReference>
<dbReference type="InterPro" id="IPR005823">
    <property type="entry name" value="Ribosomal_uL13_bac-type"/>
</dbReference>
<dbReference type="InterPro" id="IPR023563">
    <property type="entry name" value="Ribosomal_uL13_CS"/>
</dbReference>
<dbReference type="InterPro" id="IPR036899">
    <property type="entry name" value="Ribosomal_uL13_sf"/>
</dbReference>
<dbReference type="NCBIfam" id="TIGR01066">
    <property type="entry name" value="rplM_bact"/>
    <property type="match status" value="1"/>
</dbReference>
<dbReference type="PANTHER" id="PTHR11545:SF2">
    <property type="entry name" value="LARGE RIBOSOMAL SUBUNIT PROTEIN UL13M"/>
    <property type="match status" value="1"/>
</dbReference>
<dbReference type="PANTHER" id="PTHR11545">
    <property type="entry name" value="RIBOSOMAL PROTEIN L13"/>
    <property type="match status" value="1"/>
</dbReference>
<dbReference type="Pfam" id="PF00572">
    <property type="entry name" value="Ribosomal_L13"/>
    <property type="match status" value="1"/>
</dbReference>
<dbReference type="PIRSF" id="PIRSF002181">
    <property type="entry name" value="Ribosomal_L13"/>
    <property type="match status" value="1"/>
</dbReference>
<dbReference type="SUPFAM" id="SSF52161">
    <property type="entry name" value="Ribosomal protein L13"/>
    <property type="match status" value="1"/>
</dbReference>
<dbReference type="PROSITE" id="PS00783">
    <property type="entry name" value="RIBOSOMAL_L13"/>
    <property type="match status" value="1"/>
</dbReference>
<evidence type="ECO:0000255" key="1">
    <source>
        <dbReference type="HAMAP-Rule" id="MF_01366"/>
    </source>
</evidence>
<evidence type="ECO:0000305" key="2"/>
<protein>
    <recommendedName>
        <fullName evidence="1">Large ribosomal subunit protein uL13</fullName>
    </recommendedName>
    <alternativeName>
        <fullName evidence="2">50S ribosomal protein L13</fullName>
    </alternativeName>
</protein>